<dbReference type="EMBL" id="AF039081">
    <property type="protein sequence ID" value="AAC32314.1"/>
    <property type="molecule type" value="mRNA"/>
</dbReference>
<dbReference type="EMBL" id="AB451461">
    <property type="protein sequence ID" value="BAG70275.1"/>
    <property type="molecule type" value="mRNA"/>
</dbReference>
<dbReference type="EMBL" id="CR542250">
    <property type="protein sequence ID" value="CAG47046.1"/>
    <property type="molecule type" value="mRNA"/>
</dbReference>
<dbReference type="EMBL" id="CH471094">
    <property type="protein sequence ID" value="EAW96269.1"/>
    <property type="molecule type" value="Genomic_DNA"/>
</dbReference>
<dbReference type="EMBL" id="BC104873">
    <property type="protein sequence ID" value="AAI04874.1"/>
    <property type="molecule type" value="mRNA"/>
</dbReference>
<dbReference type="EMBL" id="BC106052">
    <property type="protein sequence ID" value="AAI06053.1"/>
    <property type="molecule type" value="mRNA"/>
</dbReference>
<dbReference type="EMBL" id="BC112157">
    <property type="protein sequence ID" value="AAI12158.1"/>
    <property type="molecule type" value="mRNA"/>
</dbReference>
<dbReference type="CCDS" id="CCDS8651.1"/>
<dbReference type="RefSeq" id="NP_001301.1">
    <property type="nucleotide sequence ID" value="NM_001310.4"/>
</dbReference>
<dbReference type="SMR" id="O60519"/>
<dbReference type="BioGRID" id="107779">
    <property type="interactions" value="10"/>
</dbReference>
<dbReference type="FunCoup" id="O60519">
    <property type="interactions" value="1423"/>
</dbReference>
<dbReference type="IntAct" id="O60519">
    <property type="interactions" value="7"/>
</dbReference>
<dbReference type="STRING" id="9606.ENSP00000228865"/>
<dbReference type="BioMuta" id="CREBL2"/>
<dbReference type="MassIVE" id="O60519"/>
<dbReference type="PaxDb" id="9606-ENSP00000228865"/>
<dbReference type="PeptideAtlas" id="O60519"/>
<dbReference type="ProteomicsDB" id="49456"/>
<dbReference type="Antibodypedia" id="23508">
    <property type="antibodies" value="67 antibodies from 17 providers"/>
</dbReference>
<dbReference type="DNASU" id="1389"/>
<dbReference type="Ensembl" id="ENST00000228865.3">
    <property type="protein sequence ID" value="ENSP00000228865.2"/>
    <property type="gene ID" value="ENSG00000111269.3"/>
</dbReference>
<dbReference type="GeneID" id="1389"/>
<dbReference type="KEGG" id="hsa:1389"/>
<dbReference type="MANE-Select" id="ENST00000228865.3">
    <property type="protein sequence ID" value="ENSP00000228865.2"/>
    <property type="RefSeq nucleotide sequence ID" value="NM_001310.4"/>
    <property type="RefSeq protein sequence ID" value="NP_001301.1"/>
</dbReference>
<dbReference type="UCSC" id="uc001rap.3">
    <property type="organism name" value="human"/>
</dbReference>
<dbReference type="AGR" id="HGNC:2350"/>
<dbReference type="CTD" id="1389"/>
<dbReference type="DisGeNET" id="1389"/>
<dbReference type="GeneCards" id="CREBL2"/>
<dbReference type="HGNC" id="HGNC:2350">
    <property type="gene designation" value="CREBL2"/>
</dbReference>
<dbReference type="HPA" id="ENSG00000111269">
    <property type="expression patterns" value="Tissue enhanced (adrenal)"/>
</dbReference>
<dbReference type="MIM" id="603476">
    <property type="type" value="gene"/>
</dbReference>
<dbReference type="neXtProt" id="NX_O60519"/>
<dbReference type="OpenTargets" id="ENSG00000111269"/>
<dbReference type="PharmGKB" id="PA26868"/>
<dbReference type="VEuPathDB" id="HostDB:ENSG00000111269"/>
<dbReference type="eggNOG" id="KOG4515">
    <property type="taxonomic scope" value="Eukaryota"/>
</dbReference>
<dbReference type="GeneTree" id="ENSGT00390000005388"/>
<dbReference type="HOGENOM" id="CLU_134161_0_0_1"/>
<dbReference type="InParanoid" id="O60519"/>
<dbReference type="OMA" id="DKYYKWN"/>
<dbReference type="OrthoDB" id="5984119at2759"/>
<dbReference type="PAN-GO" id="O60519">
    <property type="GO annotations" value="2 GO annotations based on evolutionary models"/>
</dbReference>
<dbReference type="PhylomeDB" id="O60519"/>
<dbReference type="TreeFam" id="TF323305"/>
<dbReference type="PathwayCommons" id="O60519"/>
<dbReference type="SignaLink" id="O60519"/>
<dbReference type="SIGNOR" id="O60519"/>
<dbReference type="BioGRID-ORCS" id="1389">
    <property type="hits" value="12 hits in 1180 CRISPR screens"/>
</dbReference>
<dbReference type="ChiTaRS" id="CREBL2">
    <property type="organism name" value="human"/>
</dbReference>
<dbReference type="GenomeRNAi" id="1389"/>
<dbReference type="Pharos" id="O60519">
    <property type="development level" value="Tbio"/>
</dbReference>
<dbReference type="PRO" id="PR:O60519"/>
<dbReference type="Proteomes" id="UP000005640">
    <property type="component" value="Chromosome 12"/>
</dbReference>
<dbReference type="RNAct" id="O60519">
    <property type="molecule type" value="protein"/>
</dbReference>
<dbReference type="Bgee" id="ENSG00000111269">
    <property type="expression patterns" value="Expressed in germinal epithelium of ovary and 214 other cell types or tissues"/>
</dbReference>
<dbReference type="GO" id="GO:0000785">
    <property type="term" value="C:chromatin"/>
    <property type="evidence" value="ECO:0000247"/>
    <property type="project" value="NTNU_SB"/>
</dbReference>
<dbReference type="GO" id="GO:0005634">
    <property type="term" value="C:nucleus"/>
    <property type="evidence" value="ECO:0000250"/>
    <property type="project" value="UniProtKB"/>
</dbReference>
<dbReference type="GO" id="GO:0003677">
    <property type="term" value="F:DNA binding"/>
    <property type="evidence" value="ECO:0007669"/>
    <property type="project" value="UniProtKB-KW"/>
</dbReference>
<dbReference type="GO" id="GO:0003700">
    <property type="term" value="F:DNA-binding transcription factor activity"/>
    <property type="evidence" value="ECO:0000304"/>
    <property type="project" value="ProtInc"/>
</dbReference>
<dbReference type="GO" id="GO:0000981">
    <property type="term" value="F:DNA-binding transcription factor activity, RNA polymerase II-specific"/>
    <property type="evidence" value="ECO:0000247"/>
    <property type="project" value="NTNU_SB"/>
</dbReference>
<dbReference type="GO" id="GO:0030154">
    <property type="term" value="P:cell differentiation"/>
    <property type="evidence" value="ECO:0007669"/>
    <property type="project" value="UniProtKB-KW"/>
</dbReference>
<dbReference type="GO" id="GO:0006351">
    <property type="term" value="P:DNA-templated transcription"/>
    <property type="evidence" value="ECO:0000304"/>
    <property type="project" value="ProtInc"/>
</dbReference>
<dbReference type="GO" id="GO:0046326">
    <property type="term" value="P:positive regulation of D-glucose import"/>
    <property type="evidence" value="ECO:0000250"/>
    <property type="project" value="UniProtKB"/>
</dbReference>
<dbReference type="GO" id="GO:0045893">
    <property type="term" value="P:positive regulation of DNA-templated transcription"/>
    <property type="evidence" value="ECO:0000250"/>
    <property type="project" value="UniProtKB"/>
</dbReference>
<dbReference type="GO" id="GO:0045600">
    <property type="term" value="P:positive regulation of fat cell differentiation"/>
    <property type="evidence" value="ECO:0000250"/>
    <property type="project" value="UniProtKB"/>
</dbReference>
<dbReference type="GO" id="GO:0046889">
    <property type="term" value="P:positive regulation of lipid biosynthetic process"/>
    <property type="evidence" value="ECO:0000250"/>
    <property type="project" value="UniProtKB"/>
</dbReference>
<dbReference type="GO" id="GO:0033138">
    <property type="term" value="P:positive regulation of peptidyl-serine phosphorylation"/>
    <property type="evidence" value="ECO:0000250"/>
    <property type="project" value="UniProtKB"/>
</dbReference>
<dbReference type="GO" id="GO:0050821">
    <property type="term" value="P:protein stabilization"/>
    <property type="evidence" value="ECO:0000250"/>
    <property type="project" value="UniProtKB"/>
</dbReference>
<dbReference type="GO" id="GO:0006355">
    <property type="term" value="P:regulation of DNA-templated transcription"/>
    <property type="evidence" value="ECO:0000318"/>
    <property type="project" value="GO_Central"/>
</dbReference>
<dbReference type="GO" id="GO:0007165">
    <property type="term" value="P:signal transduction"/>
    <property type="evidence" value="ECO:0000304"/>
    <property type="project" value="ProtInc"/>
</dbReference>
<dbReference type="CDD" id="cd14709">
    <property type="entry name" value="bZIP_CREBL2"/>
    <property type="match status" value="1"/>
</dbReference>
<dbReference type="FunFam" id="1.20.5.170:FF:000044">
    <property type="entry name" value="cAMP-responsive element-binding protein-like 2 isoform X2"/>
    <property type="match status" value="1"/>
</dbReference>
<dbReference type="Gene3D" id="1.20.5.170">
    <property type="match status" value="1"/>
</dbReference>
<dbReference type="InterPro" id="IPR004827">
    <property type="entry name" value="bZIP"/>
</dbReference>
<dbReference type="InterPro" id="IPR046347">
    <property type="entry name" value="bZIP_sf"/>
</dbReference>
<dbReference type="InterPro" id="IPR039250">
    <property type="entry name" value="CREBL2/REPTOR-BP"/>
</dbReference>
<dbReference type="PANTHER" id="PTHR21051">
    <property type="entry name" value="CAMP-RESPONSIVE ELEMENT-BINDING PROTEIN-LIKE 2"/>
    <property type="match status" value="1"/>
</dbReference>
<dbReference type="PANTHER" id="PTHR21051:SF4">
    <property type="entry name" value="CAMP-RESPONSIVE ELEMENT-BINDING PROTEIN-LIKE 2"/>
    <property type="match status" value="1"/>
</dbReference>
<dbReference type="Pfam" id="PF07716">
    <property type="entry name" value="bZIP_2"/>
    <property type="match status" value="1"/>
</dbReference>
<dbReference type="SUPFAM" id="SSF57959">
    <property type="entry name" value="Leucine zipper domain"/>
    <property type="match status" value="1"/>
</dbReference>
<comment type="function">
    <text evidence="4">Probable regulator of CREB1 transcriptional activity which is involved in adipose cells differentiation. May also play a regulatory role in the cell cycle. Identification in a chromosomal region frequently deleted in various cancers suggests that it might act as a tumor suppressor.</text>
</comment>
<comment type="subunit">
    <text evidence="1">Interacts with CREB1; regulates CREB1 phosphorylation, stability and transcriptional activity.</text>
</comment>
<comment type="interaction">
    <interactant intactId="EBI-2872455">
        <id>O60519</id>
    </interactant>
    <interactant intactId="EBI-1042699">
        <id>Q8IUR6</id>
        <label>CREBRF</label>
    </interactant>
    <organismsDiffer>false</organismsDiffer>
    <experiments>5</experiments>
</comment>
<comment type="interaction">
    <interactant intactId="EBI-2872455">
        <id>O60519</id>
    </interactant>
    <interactant intactId="EBI-742651">
        <id>P35638</id>
        <label>DDIT3</label>
    </interactant>
    <organismsDiffer>false</organismsDiffer>
    <experiments>3</experiments>
</comment>
<comment type="interaction">
    <interactant intactId="EBI-2872455">
        <id>O60519</id>
    </interactant>
    <interactant intactId="EBI-2007911">
        <id>Q16236</id>
        <label>NFE2L2</label>
    </interactant>
    <organismsDiffer>false</organismsDiffer>
    <experiments>5</experiments>
</comment>
<comment type="interaction">
    <interactant intactId="EBI-2872455">
        <id>O60519</id>
    </interactant>
    <interactant intactId="EBI-2692890">
        <id>Q96KN3</id>
        <label>PKNOX2</label>
    </interactant>
    <organismsDiffer>false</organismsDiffer>
    <experiments>3</experiments>
</comment>
<comment type="interaction">
    <interactant intactId="EBI-2872455">
        <id>O60519</id>
    </interactant>
    <interactant intactId="EBI-10180829">
        <id>Q7KZS0</id>
        <label>UBE2I</label>
    </interactant>
    <organismsDiffer>false</organismsDiffer>
    <experiments>3</experiments>
</comment>
<comment type="subcellular location">
    <subcellularLocation>
        <location evidence="1">Nucleus</location>
    </subcellularLocation>
</comment>
<comment type="PTM">
    <text evidence="3">Phosphorylated by AMPK.</text>
</comment>
<comment type="similarity">
    <text evidence="5">Belongs to the bZIP family. ATF subfamily.</text>
</comment>
<name>CRBL2_HUMAN</name>
<feature type="chain" id="PRO_0000318192" description="cAMP-responsive element-binding protein-like 2">
    <location>
        <begin position="1"/>
        <end position="120"/>
    </location>
</feature>
<feature type="domain" description="bZIP">
    <location>
        <begin position="23"/>
        <end position="86"/>
    </location>
</feature>
<feature type="region of interest" description="Disordered" evidence="2">
    <location>
        <begin position="1"/>
        <end position="24"/>
    </location>
</feature>
<feature type="region of interest" description="Basic motif" evidence="1">
    <location>
        <begin position="29"/>
        <end position="60"/>
    </location>
</feature>
<feature type="region of interest" description="Leucine-zipper" evidence="1">
    <location>
        <begin position="62"/>
        <end position="69"/>
    </location>
</feature>
<feature type="region of interest" description="Disordered" evidence="2">
    <location>
        <begin position="93"/>
        <end position="120"/>
    </location>
</feature>
<feature type="compositionally biased region" description="Basic residues" evidence="2">
    <location>
        <begin position="10"/>
        <end position="21"/>
    </location>
</feature>
<accession>O60519</accession>
<accession>B5BUM5</accession>
<protein>
    <recommendedName>
        <fullName>cAMP-responsive element-binding protein-like 2</fullName>
    </recommendedName>
</protein>
<reference key="1">
    <citation type="journal article" date="1998" name="Genomics">
        <title>CREBL2, a novel transcript from the chromosome 12 region flanked by ETV6 and CDKN1B.</title>
        <authorList>
            <person name="Hoornaert I."/>
            <person name="Marynen P."/>
            <person name="Baens M."/>
        </authorList>
    </citation>
    <scope>NUCLEOTIDE SEQUENCE [MRNA]</scope>
    <scope>FUNCTION</scope>
    <source>
        <tissue>Bone marrow</tissue>
    </source>
</reference>
<reference key="2">
    <citation type="submission" date="2004-06" db="EMBL/GenBank/DDBJ databases">
        <title>Cloning of human full open reading frames in Gateway(TM) system entry vector (pDONR201).</title>
        <authorList>
            <person name="Ebert L."/>
            <person name="Schick M."/>
            <person name="Neubert P."/>
            <person name="Schatten R."/>
            <person name="Henze S."/>
            <person name="Korn B."/>
        </authorList>
    </citation>
    <scope>NUCLEOTIDE SEQUENCE [LARGE SCALE MRNA]</scope>
</reference>
<reference key="3">
    <citation type="journal article" date="2008" name="Nat. Methods">
        <title>Human protein factory for converting the transcriptome into an in vitro-expressed proteome.</title>
        <authorList>
            <person name="Goshima N."/>
            <person name="Kawamura Y."/>
            <person name="Fukumoto A."/>
            <person name="Miura A."/>
            <person name="Honma R."/>
            <person name="Satoh R."/>
            <person name="Wakamatsu A."/>
            <person name="Yamamoto J."/>
            <person name="Kimura K."/>
            <person name="Nishikawa T."/>
            <person name="Andoh T."/>
            <person name="Iida Y."/>
            <person name="Ishikawa K."/>
            <person name="Ito E."/>
            <person name="Kagawa N."/>
            <person name="Kaminaga C."/>
            <person name="Kanehori K."/>
            <person name="Kawakami B."/>
            <person name="Kenmochi K."/>
            <person name="Kimura R."/>
            <person name="Kobayashi M."/>
            <person name="Kuroita T."/>
            <person name="Kuwayama H."/>
            <person name="Maruyama Y."/>
            <person name="Matsuo K."/>
            <person name="Minami K."/>
            <person name="Mitsubori M."/>
            <person name="Mori M."/>
            <person name="Morishita R."/>
            <person name="Murase A."/>
            <person name="Nishikawa A."/>
            <person name="Nishikawa S."/>
            <person name="Okamoto T."/>
            <person name="Sakagami N."/>
            <person name="Sakamoto Y."/>
            <person name="Sasaki Y."/>
            <person name="Seki T."/>
            <person name="Sono S."/>
            <person name="Sugiyama A."/>
            <person name="Sumiya T."/>
            <person name="Takayama T."/>
            <person name="Takayama Y."/>
            <person name="Takeda H."/>
            <person name="Togashi T."/>
            <person name="Yahata K."/>
            <person name="Yamada H."/>
            <person name="Yanagisawa Y."/>
            <person name="Endo Y."/>
            <person name="Imamoto F."/>
            <person name="Kisu Y."/>
            <person name="Tanaka S."/>
            <person name="Isogai T."/>
            <person name="Imai J."/>
            <person name="Watanabe S."/>
            <person name="Nomura N."/>
        </authorList>
    </citation>
    <scope>NUCLEOTIDE SEQUENCE [LARGE SCALE MRNA]</scope>
</reference>
<reference key="4">
    <citation type="journal article" date="2006" name="Nature">
        <title>The finished DNA sequence of human chromosome 12.</title>
        <authorList>
            <person name="Scherer S.E."/>
            <person name="Muzny D.M."/>
            <person name="Buhay C.J."/>
            <person name="Chen R."/>
            <person name="Cree A."/>
            <person name="Ding Y."/>
            <person name="Dugan-Rocha S."/>
            <person name="Gill R."/>
            <person name="Gunaratne P."/>
            <person name="Harris R.A."/>
            <person name="Hawes A.C."/>
            <person name="Hernandez J."/>
            <person name="Hodgson A.V."/>
            <person name="Hume J."/>
            <person name="Jackson A."/>
            <person name="Khan Z.M."/>
            <person name="Kovar-Smith C."/>
            <person name="Lewis L.R."/>
            <person name="Lozado R.J."/>
            <person name="Metzker M.L."/>
            <person name="Milosavljevic A."/>
            <person name="Miner G.R."/>
            <person name="Montgomery K.T."/>
            <person name="Morgan M.B."/>
            <person name="Nazareth L.V."/>
            <person name="Scott G."/>
            <person name="Sodergren E."/>
            <person name="Song X.-Z."/>
            <person name="Steffen D."/>
            <person name="Lovering R.C."/>
            <person name="Wheeler D.A."/>
            <person name="Worley K.C."/>
            <person name="Yuan Y."/>
            <person name="Zhang Z."/>
            <person name="Adams C.Q."/>
            <person name="Ansari-Lari M.A."/>
            <person name="Ayele M."/>
            <person name="Brown M.J."/>
            <person name="Chen G."/>
            <person name="Chen Z."/>
            <person name="Clerc-Blankenburg K.P."/>
            <person name="Davis C."/>
            <person name="Delgado O."/>
            <person name="Dinh H.H."/>
            <person name="Draper H."/>
            <person name="Gonzalez-Garay M.L."/>
            <person name="Havlak P."/>
            <person name="Jackson L.R."/>
            <person name="Jacob L.S."/>
            <person name="Kelly S.H."/>
            <person name="Li L."/>
            <person name="Li Z."/>
            <person name="Liu J."/>
            <person name="Liu W."/>
            <person name="Lu J."/>
            <person name="Maheshwari M."/>
            <person name="Nguyen B.-V."/>
            <person name="Okwuonu G.O."/>
            <person name="Pasternak S."/>
            <person name="Perez L.M."/>
            <person name="Plopper F.J.H."/>
            <person name="Santibanez J."/>
            <person name="Shen H."/>
            <person name="Tabor P.E."/>
            <person name="Verduzco D."/>
            <person name="Waldron L."/>
            <person name="Wang Q."/>
            <person name="Williams G.A."/>
            <person name="Zhang J."/>
            <person name="Zhou J."/>
            <person name="Allen C.C."/>
            <person name="Amin A.G."/>
            <person name="Anyalebechi V."/>
            <person name="Bailey M."/>
            <person name="Barbaria J.A."/>
            <person name="Bimage K.E."/>
            <person name="Bryant N.P."/>
            <person name="Burch P.E."/>
            <person name="Burkett C.E."/>
            <person name="Burrell K.L."/>
            <person name="Calderon E."/>
            <person name="Cardenas V."/>
            <person name="Carter K."/>
            <person name="Casias K."/>
            <person name="Cavazos I."/>
            <person name="Cavazos S.R."/>
            <person name="Ceasar H."/>
            <person name="Chacko J."/>
            <person name="Chan S.N."/>
            <person name="Chavez D."/>
            <person name="Christopoulos C."/>
            <person name="Chu J."/>
            <person name="Cockrell R."/>
            <person name="Cox C.D."/>
            <person name="Dang M."/>
            <person name="Dathorne S.R."/>
            <person name="David R."/>
            <person name="Davis C.M."/>
            <person name="Davy-Carroll L."/>
            <person name="Deshazo D.R."/>
            <person name="Donlin J.E."/>
            <person name="D'Souza L."/>
            <person name="Eaves K.A."/>
            <person name="Egan A."/>
            <person name="Emery-Cohen A.J."/>
            <person name="Escotto M."/>
            <person name="Flagg N."/>
            <person name="Forbes L.D."/>
            <person name="Gabisi A.M."/>
            <person name="Garza M."/>
            <person name="Hamilton C."/>
            <person name="Henderson N."/>
            <person name="Hernandez O."/>
            <person name="Hines S."/>
            <person name="Hogues M.E."/>
            <person name="Huang M."/>
            <person name="Idlebird D.G."/>
            <person name="Johnson R."/>
            <person name="Jolivet A."/>
            <person name="Jones S."/>
            <person name="Kagan R."/>
            <person name="King L.M."/>
            <person name="Leal B."/>
            <person name="Lebow H."/>
            <person name="Lee S."/>
            <person name="LeVan J.M."/>
            <person name="Lewis L.C."/>
            <person name="London P."/>
            <person name="Lorensuhewa L.M."/>
            <person name="Loulseged H."/>
            <person name="Lovett D.A."/>
            <person name="Lucier A."/>
            <person name="Lucier R.L."/>
            <person name="Ma J."/>
            <person name="Madu R.C."/>
            <person name="Mapua P."/>
            <person name="Martindale A.D."/>
            <person name="Martinez E."/>
            <person name="Massey E."/>
            <person name="Mawhiney S."/>
            <person name="Meador M.G."/>
            <person name="Mendez S."/>
            <person name="Mercado C."/>
            <person name="Mercado I.C."/>
            <person name="Merritt C.E."/>
            <person name="Miner Z.L."/>
            <person name="Minja E."/>
            <person name="Mitchell T."/>
            <person name="Mohabbat F."/>
            <person name="Mohabbat K."/>
            <person name="Montgomery B."/>
            <person name="Moore N."/>
            <person name="Morris S."/>
            <person name="Munidasa M."/>
            <person name="Ngo R.N."/>
            <person name="Nguyen N.B."/>
            <person name="Nickerson E."/>
            <person name="Nwaokelemeh O.O."/>
            <person name="Nwokenkwo S."/>
            <person name="Obregon M."/>
            <person name="Oguh M."/>
            <person name="Oragunye N."/>
            <person name="Oviedo R.J."/>
            <person name="Parish B.J."/>
            <person name="Parker D.N."/>
            <person name="Parrish J."/>
            <person name="Parks K.L."/>
            <person name="Paul H.A."/>
            <person name="Payton B.A."/>
            <person name="Perez A."/>
            <person name="Perrin W."/>
            <person name="Pickens A."/>
            <person name="Primus E.L."/>
            <person name="Pu L.-L."/>
            <person name="Puazo M."/>
            <person name="Quiles M.M."/>
            <person name="Quiroz J.B."/>
            <person name="Rabata D."/>
            <person name="Reeves K."/>
            <person name="Ruiz S.J."/>
            <person name="Shao H."/>
            <person name="Sisson I."/>
            <person name="Sonaike T."/>
            <person name="Sorelle R.P."/>
            <person name="Sutton A.E."/>
            <person name="Svatek A.F."/>
            <person name="Svetz L.A."/>
            <person name="Tamerisa K.S."/>
            <person name="Taylor T.R."/>
            <person name="Teague B."/>
            <person name="Thomas N."/>
            <person name="Thorn R.D."/>
            <person name="Trejos Z.Y."/>
            <person name="Trevino B.K."/>
            <person name="Ukegbu O.N."/>
            <person name="Urban J.B."/>
            <person name="Vasquez L.I."/>
            <person name="Vera V.A."/>
            <person name="Villasana D.M."/>
            <person name="Wang L."/>
            <person name="Ward-Moore S."/>
            <person name="Warren J.T."/>
            <person name="Wei X."/>
            <person name="White F."/>
            <person name="Williamson A.L."/>
            <person name="Wleczyk R."/>
            <person name="Wooden H.S."/>
            <person name="Wooden S.H."/>
            <person name="Yen J."/>
            <person name="Yoon L."/>
            <person name="Yoon V."/>
            <person name="Zorrilla S.E."/>
            <person name="Nelson D."/>
            <person name="Kucherlapati R."/>
            <person name="Weinstock G."/>
            <person name="Gibbs R.A."/>
        </authorList>
    </citation>
    <scope>NUCLEOTIDE SEQUENCE [LARGE SCALE GENOMIC DNA]</scope>
</reference>
<reference key="5">
    <citation type="submission" date="2005-07" db="EMBL/GenBank/DDBJ databases">
        <authorList>
            <person name="Mural R.J."/>
            <person name="Istrail S."/>
            <person name="Sutton G.G."/>
            <person name="Florea L."/>
            <person name="Halpern A.L."/>
            <person name="Mobarry C.M."/>
            <person name="Lippert R."/>
            <person name="Walenz B."/>
            <person name="Shatkay H."/>
            <person name="Dew I."/>
            <person name="Miller J.R."/>
            <person name="Flanigan M.J."/>
            <person name="Edwards N.J."/>
            <person name="Bolanos R."/>
            <person name="Fasulo D."/>
            <person name="Halldorsson B.V."/>
            <person name="Hannenhalli S."/>
            <person name="Turner R."/>
            <person name="Yooseph S."/>
            <person name="Lu F."/>
            <person name="Nusskern D.R."/>
            <person name="Shue B.C."/>
            <person name="Zheng X.H."/>
            <person name="Zhong F."/>
            <person name="Delcher A.L."/>
            <person name="Huson D.H."/>
            <person name="Kravitz S.A."/>
            <person name="Mouchard L."/>
            <person name="Reinert K."/>
            <person name="Remington K.A."/>
            <person name="Clark A.G."/>
            <person name="Waterman M.S."/>
            <person name="Eichler E.E."/>
            <person name="Adams M.D."/>
            <person name="Hunkapiller M.W."/>
            <person name="Myers E.W."/>
            <person name="Venter J.C."/>
        </authorList>
    </citation>
    <scope>NUCLEOTIDE SEQUENCE [LARGE SCALE GENOMIC DNA]</scope>
</reference>
<reference key="6">
    <citation type="journal article" date="2004" name="Genome Res.">
        <title>The status, quality, and expansion of the NIH full-length cDNA project: the Mammalian Gene Collection (MGC).</title>
        <authorList>
            <consortium name="The MGC Project Team"/>
        </authorList>
    </citation>
    <scope>NUCLEOTIDE SEQUENCE [LARGE SCALE MRNA]</scope>
    <source>
        <tissue>Brain</tissue>
        <tissue>Skin</tissue>
    </source>
</reference>
<reference key="7">
    <citation type="journal article" date="2008" name="J. Appl. Physiol.">
        <title>AMP-activated protein kinase phosphorylates transcription factors of the CREB family.</title>
        <authorList>
            <person name="Thomson D.M."/>
            <person name="Herway S.T."/>
            <person name="Fillmore N."/>
            <person name="Kim H."/>
            <person name="Brown J.D."/>
            <person name="Barrow J.R."/>
            <person name="Winder W.W."/>
        </authorList>
    </citation>
    <scope>PHOSPHORYLATION BY AMPK</scope>
</reference>
<proteinExistence type="evidence at protein level"/>
<sequence>MDDSKVVGGKVKKPGKRGRKPAKIDLKAKLERSRQSARECRARKKLRYQYLEELVSSRERAICALREELEMYKQWCMAMDQGKIPSEIKALLTGEEQNKSQQNSSRHTKAGKTDANSNSW</sequence>
<organism>
    <name type="scientific">Homo sapiens</name>
    <name type="common">Human</name>
    <dbReference type="NCBI Taxonomy" id="9606"/>
    <lineage>
        <taxon>Eukaryota</taxon>
        <taxon>Metazoa</taxon>
        <taxon>Chordata</taxon>
        <taxon>Craniata</taxon>
        <taxon>Vertebrata</taxon>
        <taxon>Euteleostomi</taxon>
        <taxon>Mammalia</taxon>
        <taxon>Eutheria</taxon>
        <taxon>Euarchontoglires</taxon>
        <taxon>Primates</taxon>
        <taxon>Haplorrhini</taxon>
        <taxon>Catarrhini</taxon>
        <taxon>Hominidae</taxon>
        <taxon>Homo</taxon>
    </lineage>
</organism>
<evidence type="ECO:0000250" key="1"/>
<evidence type="ECO:0000256" key="2">
    <source>
        <dbReference type="SAM" id="MobiDB-lite"/>
    </source>
</evidence>
<evidence type="ECO:0000269" key="3">
    <source>
    </source>
</evidence>
<evidence type="ECO:0000269" key="4">
    <source>
    </source>
</evidence>
<evidence type="ECO:0000305" key="5"/>
<keyword id="KW-0010">Activator</keyword>
<keyword id="KW-0131">Cell cycle</keyword>
<keyword id="KW-0221">Differentiation</keyword>
<keyword id="KW-0238">DNA-binding</keyword>
<keyword id="KW-0539">Nucleus</keyword>
<keyword id="KW-0597">Phosphoprotein</keyword>
<keyword id="KW-1267">Proteomics identification</keyword>
<keyword id="KW-1185">Reference proteome</keyword>
<keyword id="KW-0804">Transcription</keyword>
<keyword id="KW-0805">Transcription regulation</keyword>
<keyword id="KW-0043">Tumor suppressor</keyword>
<gene>
    <name type="primary">CREBL2</name>
</gene>